<comment type="function">
    <text evidence="1">An accessory protein needed during the final step in the assembly of 30S ribosomal subunit, possibly for assembly of the head region. Essential for efficient processing of 16S rRNA. May be needed both before and after RbfA during the maturation of 16S rRNA. It has affinity for free ribosomal 30S subunits but not for 70S ribosomes.</text>
</comment>
<comment type="subunit">
    <text evidence="1">Binds ribosomal protein uS19.</text>
</comment>
<comment type="subcellular location">
    <subcellularLocation>
        <location evidence="1">Cytoplasm</location>
    </subcellularLocation>
</comment>
<comment type="domain">
    <text evidence="1">The PRC barrel domain binds ribosomal protein uS19.</text>
</comment>
<comment type="similarity">
    <text evidence="1">Belongs to the RimM family.</text>
</comment>
<accession>Q18BB6</accession>
<name>RIMM_CLOD6</name>
<keyword id="KW-0143">Chaperone</keyword>
<keyword id="KW-0963">Cytoplasm</keyword>
<keyword id="KW-1185">Reference proteome</keyword>
<keyword id="KW-0690">Ribosome biogenesis</keyword>
<keyword id="KW-0698">rRNA processing</keyword>
<sequence length="171" mass="19770">MKEKLTHFKVGQIVNTQGLKGEVRVYPLTDDIERFDELKDFYLGKDLNNKLAVEKVRYKGSMVIMKIKGIDSIEKAEKLKNKFMYVSREDSRELEEGEFFIADMIGMEVLTVDGKYVGILEDVLQYSANDVYVVKGEEDKEFMIPAIKKFVPTIDIDERKMIIDPIKGMID</sequence>
<gene>
    <name evidence="1" type="primary">rimM</name>
    <name type="ordered locus">CD630_12550</name>
</gene>
<proteinExistence type="inferred from homology"/>
<evidence type="ECO:0000255" key="1">
    <source>
        <dbReference type="HAMAP-Rule" id="MF_00014"/>
    </source>
</evidence>
<organism>
    <name type="scientific">Clostridioides difficile (strain 630)</name>
    <name type="common">Peptoclostridium difficile</name>
    <dbReference type="NCBI Taxonomy" id="272563"/>
    <lineage>
        <taxon>Bacteria</taxon>
        <taxon>Bacillati</taxon>
        <taxon>Bacillota</taxon>
        <taxon>Clostridia</taxon>
        <taxon>Peptostreptococcales</taxon>
        <taxon>Peptostreptococcaceae</taxon>
        <taxon>Clostridioides</taxon>
    </lineage>
</organism>
<reference key="1">
    <citation type="journal article" date="2006" name="Nat. Genet.">
        <title>The multidrug-resistant human pathogen Clostridium difficile has a highly mobile, mosaic genome.</title>
        <authorList>
            <person name="Sebaihia M."/>
            <person name="Wren B.W."/>
            <person name="Mullany P."/>
            <person name="Fairweather N.F."/>
            <person name="Minton N."/>
            <person name="Stabler R."/>
            <person name="Thomson N.R."/>
            <person name="Roberts A.P."/>
            <person name="Cerdeno-Tarraga A.M."/>
            <person name="Wang H."/>
            <person name="Holden M.T.G."/>
            <person name="Wright A."/>
            <person name="Churcher C."/>
            <person name="Quail M.A."/>
            <person name="Baker S."/>
            <person name="Bason N."/>
            <person name="Brooks K."/>
            <person name="Chillingworth T."/>
            <person name="Cronin A."/>
            <person name="Davis P."/>
            <person name="Dowd L."/>
            <person name="Fraser A."/>
            <person name="Feltwell T."/>
            <person name="Hance Z."/>
            <person name="Holroyd S."/>
            <person name="Jagels K."/>
            <person name="Moule S."/>
            <person name="Mungall K."/>
            <person name="Price C."/>
            <person name="Rabbinowitsch E."/>
            <person name="Sharp S."/>
            <person name="Simmonds M."/>
            <person name="Stevens K."/>
            <person name="Unwin L."/>
            <person name="Whithead S."/>
            <person name="Dupuy B."/>
            <person name="Dougan G."/>
            <person name="Barrell B."/>
            <person name="Parkhill J."/>
        </authorList>
    </citation>
    <scope>NUCLEOTIDE SEQUENCE [LARGE SCALE GENOMIC DNA]</scope>
    <source>
        <strain>630</strain>
    </source>
</reference>
<feature type="chain" id="PRO_0000321721" description="Ribosome maturation factor RimM">
    <location>
        <begin position="1"/>
        <end position="171"/>
    </location>
</feature>
<feature type="domain" description="PRC barrel" evidence="1">
    <location>
        <begin position="96"/>
        <end position="169"/>
    </location>
</feature>
<protein>
    <recommendedName>
        <fullName evidence="1">Ribosome maturation factor RimM</fullName>
    </recommendedName>
</protein>
<dbReference type="EMBL" id="AM180355">
    <property type="protein sequence ID" value="CAJ68111.1"/>
    <property type="molecule type" value="Genomic_DNA"/>
</dbReference>
<dbReference type="RefSeq" id="WP_009889030.1">
    <property type="nucleotide sequence ID" value="NZ_JAUPES010000045.1"/>
</dbReference>
<dbReference type="RefSeq" id="YP_001087749.1">
    <property type="nucleotide sequence ID" value="NC_009089.1"/>
</dbReference>
<dbReference type="SMR" id="Q18BB6"/>
<dbReference type="STRING" id="272563.CD630_12550"/>
<dbReference type="EnsemblBacteria" id="CAJ68111">
    <property type="protein sequence ID" value="CAJ68111"/>
    <property type="gene ID" value="CD630_12550"/>
</dbReference>
<dbReference type="KEGG" id="cdf:CD630_12550"/>
<dbReference type="KEGG" id="pdc:CDIF630_01408"/>
<dbReference type="PATRIC" id="fig|272563.120.peg.1313"/>
<dbReference type="eggNOG" id="COG0806">
    <property type="taxonomic scope" value="Bacteria"/>
</dbReference>
<dbReference type="OrthoDB" id="9810331at2"/>
<dbReference type="PhylomeDB" id="Q18BB6"/>
<dbReference type="BioCyc" id="PDIF272563:G12WB-1389-MONOMER"/>
<dbReference type="Proteomes" id="UP000001978">
    <property type="component" value="Chromosome"/>
</dbReference>
<dbReference type="GO" id="GO:0005737">
    <property type="term" value="C:cytoplasm"/>
    <property type="evidence" value="ECO:0007669"/>
    <property type="project" value="UniProtKB-SubCell"/>
</dbReference>
<dbReference type="GO" id="GO:0005840">
    <property type="term" value="C:ribosome"/>
    <property type="evidence" value="ECO:0007669"/>
    <property type="project" value="InterPro"/>
</dbReference>
<dbReference type="GO" id="GO:0043022">
    <property type="term" value="F:ribosome binding"/>
    <property type="evidence" value="ECO:0007669"/>
    <property type="project" value="InterPro"/>
</dbReference>
<dbReference type="GO" id="GO:0042274">
    <property type="term" value="P:ribosomal small subunit biogenesis"/>
    <property type="evidence" value="ECO:0007669"/>
    <property type="project" value="UniProtKB-UniRule"/>
</dbReference>
<dbReference type="GO" id="GO:0006364">
    <property type="term" value="P:rRNA processing"/>
    <property type="evidence" value="ECO:0007669"/>
    <property type="project" value="UniProtKB-UniRule"/>
</dbReference>
<dbReference type="Gene3D" id="2.30.30.240">
    <property type="entry name" value="PRC-barrel domain"/>
    <property type="match status" value="1"/>
</dbReference>
<dbReference type="Gene3D" id="2.40.30.60">
    <property type="entry name" value="RimM"/>
    <property type="match status" value="1"/>
</dbReference>
<dbReference type="HAMAP" id="MF_00014">
    <property type="entry name" value="Ribosome_mat_RimM"/>
    <property type="match status" value="1"/>
</dbReference>
<dbReference type="InterPro" id="IPR011033">
    <property type="entry name" value="PRC_barrel-like_sf"/>
</dbReference>
<dbReference type="InterPro" id="IPR056792">
    <property type="entry name" value="PRC_RimM"/>
</dbReference>
<dbReference type="InterPro" id="IPR011961">
    <property type="entry name" value="RimM"/>
</dbReference>
<dbReference type="InterPro" id="IPR002676">
    <property type="entry name" value="RimM_N"/>
</dbReference>
<dbReference type="InterPro" id="IPR036976">
    <property type="entry name" value="RimM_N_sf"/>
</dbReference>
<dbReference type="InterPro" id="IPR009000">
    <property type="entry name" value="Transl_B-barrel_sf"/>
</dbReference>
<dbReference type="NCBIfam" id="TIGR02273">
    <property type="entry name" value="16S_RimM"/>
    <property type="match status" value="1"/>
</dbReference>
<dbReference type="PANTHER" id="PTHR33692">
    <property type="entry name" value="RIBOSOME MATURATION FACTOR RIMM"/>
    <property type="match status" value="1"/>
</dbReference>
<dbReference type="PANTHER" id="PTHR33692:SF1">
    <property type="entry name" value="RIBOSOME MATURATION FACTOR RIMM"/>
    <property type="match status" value="1"/>
</dbReference>
<dbReference type="Pfam" id="PF24986">
    <property type="entry name" value="PRC_RimM"/>
    <property type="match status" value="1"/>
</dbReference>
<dbReference type="Pfam" id="PF01782">
    <property type="entry name" value="RimM"/>
    <property type="match status" value="1"/>
</dbReference>
<dbReference type="SUPFAM" id="SSF50346">
    <property type="entry name" value="PRC-barrel domain"/>
    <property type="match status" value="1"/>
</dbReference>
<dbReference type="SUPFAM" id="SSF50447">
    <property type="entry name" value="Translation proteins"/>
    <property type="match status" value="1"/>
</dbReference>